<protein>
    <recommendedName>
        <fullName evidence="3">Putative protein PTGES3L</fullName>
    </recommendedName>
    <alternativeName>
        <fullName>Prostaglandin E synthase 3-like</fullName>
    </alternativeName>
</protein>
<dbReference type="EMBL" id="AC055866">
    <property type="status" value="NOT_ANNOTATED_CDS"/>
    <property type="molecule type" value="Genomic_DNA"/>
</dbReference>
<dbReference type="CCDS" id="CCDS45693.1">
    <molecule id="E9PB15-3"/>
</dbReference>
<dbReference type="RefSeq" id="NP_001136125.2">
    <molecule id="E9PB15-3"/>
    <property type="nucleotide sequence ID" value="NM_001142653.2"/>
</dbReference>
<dbReference type="RefSeq" id="NP_001136126.1">
    <property type="nucleotide sequence ID" value="NM_001142654.1"/>
</dbReference>
<dbReference type="SMR" id="E9PB15"/>
<dbReference type="BioGRID" id="3190352">
    <property type="interactions" value="2"/>
</dbReference>
<dbReference type="FunCoup" id="E9PB15">
    <property type="interactions" value="1583"/>
</dbReference>
<dbReference type="STRING" id="9606.ENSP00000386902"/>
<dbReference type="iPTMnet" id="E9PB15"/>
<dbReference type="PhosphoSitePlus" id="E9PB15"/>
<dbReference type="BioMuta" id="PTGES3L"/>
<dbReference type="jPOST" id="E9PB15"/>
<dbReference type="MassIVE" id="E9PB15"/>
<dbReference type="PaxDb" id="9606-ENSP00000386902"/>
<dbReference type="PeptideAtlas" id="E9PB15"/>
<dbReference type="ProteomicsDB" id="19122">
    <molecule id="E9PB15-1"/>
</dbReference>
<dbReference type="ProteomicsDB" id="7473"/>
<dbReference type="DNASU" id="80755"/>
<dbReference type="Ensembl" id="ENST00000451885.3">
    <molecule id="E9PB15-3"/>
    <property type="protein sequence ID" value="ENSP00000404440.3"/>
    <property type="gene ID" value="ENSG00000267060.7"/>
</dbReference>
<dbReference type="GeneID" id="100885848"/>
<dbReference type="KEGG" id="hsa:100885848"/>
<dbReference type="UCSC" id="uc002ich.4">
    <property type="organism name" value="human"/>
</dbReference>
<dbReference type="AGR" id="HGNC:43943"/>
<dbReference type="CTD" id="100885848"/>
<dbReference type="GeneCards" id="PTGES3L"/>
<dbReference type="HGNC" id="HGNC:43943">
    <property type="gene designation" value="PTGES3L"/>
</dbReference>
<dbReference type="HPA" id="ENSG00000267060">
    <property type="expression patterns" value="Group enriched (heart muscle, skeletal muscle, tongue)"/>
</dbReference>
<dbReference type="neXtProt" id="NX_E9PB15"/>
<dbReference type="OpenTargets" id="ENSG00000267060"/>
<dbReference type="PharmGKB" id="PA142670464"/>
<dbReference type="VEuPathDB" id="HostDB:ENSG00000267060"/>
<dbReference type="eggNOG" id="KOG2105">
    <property type="taxonomic scope" value="Eukaryota"/>
</dbReference>
<dbReference type="eggNOG" id="KOG3158">
    <property type="taxonomic scope" value="Eukaryota"/>
</dbReference>
<dbReference type="GeneTree" id="ENSGT00940000163448"/>
<dbReference type="InParanoid" id="E9PB15"/>
<dbReference type="OrthoDB" id="9530073at2759"/>
<dbReference type="PAN-GO" id="E9PB15">
    <property type="GO annotations" value="6 GO annotations based on evolutionary models"/>
</dbReference>
<dbReference type="PhylomeDB" id="E9PB15"/>
<dbReference type="PathwayCommons" id="E9PB15"/>
<dbReference type="BioGRID-ORCS" id="100885848">
    <property type="hits" value="11 hits in 1048 CRISPR screens"/>
</dbReference>
<dbReference type="GenomeRNAi" id="100885848"/>
<dbReference type="Pharos" id="E9PB15">
    <property type="development level" value="Tdark"/>
</dbReference>
<dbReference type="PRO" id="PR:E9PB15"/>
<dbReference type="Proteomes" id="UP000005640">
    <property type="component" value="Chromosome 17"/>
</dbReference>
<dbReference type="RNAct" id="E9PB15">
    <property type="molecule type" value="protein"/>
</dbReference>
<dbReference type="Bgee" id="ENSG00000267060">
    <property type="expression patterns" value="Expressed in hindlimb stylopod muscle and 107 other cell types or tissues"/>
</dbReference>
<dbReference type="ExpressionAtlas" id="E9PB15">
    <property type="expression patterns" value="baseline and differential"/>
</dbReference>
<dbReference type="GO" id="GO:0005829">
    <property type="term" value="C:cytosol"/>
    <property type="evidence" value="ECO:0000318"/>
    <property type="project" value="GO_Central"/>
</dbReference>
<dbReference type="GO" id="GO:0005634">
    <property type="term" value="C:nucleus"/>
    <property type="evidence" value="ECO:0000318"/>
    <property type="project" value="GO_Central"/>
</dbReference>
<dbReference type="GO" id="GO:0051879">
    <property type="term" value="F:Hsp90 protein binding"/>
    <property type="evidence" value="ECO:0000318"/>
    <property type="project" value="GO_Central"/>
</dbReference>
<dbReference type="GO" id="GO:0051087">
    <property type="term" value="F:protein-folding chaperone binding"/>
    <property type="evidence" value="ECO:0000318"/>
    <property type="project" value="GO_Central"/>
</dbReference>
<dbReference type="GO" id="GO:0051131">
    <property type="term" value="P:chaperone-mediated protein complex assembly"/>
    <property type="evidence" value="ECO:0000318"/>
    <property type="project" value="GO_Central"/>
</dbReference>
<dbReference type="GO" id="GO:0006457">
    <property type="term" value="P:protein folding"/>
    <property type="evidence" value="ECO:0000318"/>
    <property type="project" value="GO_Central"/>
</dbReference>
<dbReference type="Gene3D" id="2.60.40.790">
    <property type="match status" value="1"/>
</dbReference>
<dbReference type="InterPro" id="IPR007052">
    <property type="entry name" value="CS_dom"/>
</dbReference>
<dbReference type="InterPro" id="IPR008978">
    <property type="entry name" value="HSP20-like_chaperone"/>
</dbReference>
<dbReference type="InterPro" id="IPR045250">
    <property type="entry name" value="p23-like"/>
</dbReference>
<dbReference type="PANTHER" id="PTHR22932:SF4">
    <property type="entry name" value="PROTEIN PTGES3L-RELATED"/>
    <property type="match status" value="1"/>
</dbReference>
<dbReference type="PANTHER" id="PTHR22932">
    <property type="entry name" value="TELOMERASE-BINDING PROTEIN P23 HSP90 CO-CHAPERONE"/>
    <property type="match status" value="1"/>
</dbReference>
<dbReference type="SUPFAM" id="SSF49764">
    <property type="entry name" value="HSP20-like chaperones"/>
    <property type="match status" value="1"/>
</dbReference>
<dbReference type="PROSITE" id="PS51203">
    <property type="entry name" value="CS"/>
    <property type="match status" value="1"/>
</dbReference>
<evidence type="ECO:0000255" key="1">
    <source>
        <dbReference type="PROSITE-ProRule" id="PRU00547"/>
    </source>
</evidence>
<evidence type="ECO:0000256" key="2">
    <source>
        <dbReference type="SAM" id="MobiDB-lite"/>
    </source>
</evidence>
<evidence type="ECO:0000305" key="3"/>
<evidence type="ECO:0000312" key="4">
    <source>
        <dbReference type="HGNC" id="HGNC:43943"/>
    </source>
</evidence>
<accession>E9PB15</accession>
<accession>B9A003</accession>
<keyword id="KW-0025">Alternative splicing</keyword>
<keyword id="KW-1267">Proteomics identification</keyword>
<keyword id="KW-1185">Reference proteome</keyword>
<organism>
    <name type="scientific">Homo sapiens</name>
    <name type="common">Human</name>
    <dbReference type="NCBI Taxonomy" id="9606"/>
    <lineage>
        <taxon>Eukaryota</taxon>
        <taxon>Metazoa</taxon>
        <taxon>Chordata</taxon>
        <taxon>Craniata</taxon>
        <taxon>Vertebrata</taxon>
        <taxon>Euteleostomi</taxon>
        <taxon>Mammalia</taxon>
        <taxon>Eutheria</taxon>
        <taxon>Euarchontoglires</taxon>
        <taxon>Primates</taxon>
        <taxon>Haplorrhini</taxon>
        <taxon>Catarrhini</taxon>
        <taxon>Hominidae</taxon>
        <taxon>Homo</taxon>
    </lineage>
</organism>
<sequence length="166" mass="19074">MFSLPLNCSPDHIRRGSCWGRPQDLKIAAPAWNSKCHPGAGAAMARQHARTLWYDRPRYVFMEFCVEDSTDVHVLIEDHRIVFSCKNADGVELYNEIEFYAKVNSKPVWLSVDFDNWRDWEGDEEMELAHVEHYAELLKKVSTKRPPPAMDDLDDDSDSADDATSN</sequence>
<feature type="chain" id="PRO_0000418440" description="Putative protein PTGES3L">
    <location>
        <begin position="1"/>
        <end position="166"/>
    </location>
</feature>
<feature type="domain" description="CS" evidence="1">
    <location>
        <begin position="46"/>
        <end position="154"/>
    </location>
</feature>
<feature type="region of interest" description="Disordered" evidence="2">
    <location>
        <begin position="142"/>
        <end position="166"/>
    </location>
</feature>
<feature type="compositionally biased region" description="Acidic residues" evidence="2">
    <location>
        <begin position="151"/>
        <end position="166"/>
    </location>
</feature>
<feature type="splice variant" id="VSP_060622" description="In isoform 5.">
    <location>
        <begin position="1"/>
        <end position="43"/>
    </location>
</feature>
<feature type="splice variant" id="VSP_060623" description="In isoform 4.">
    <location>
        <begin position="47"/>
        <end position="84"/>
    </location>
</feature>
<feature type="splice variant" id="VSP_060624" description="In isoform 4.">
    <original>S</original>
    <variation>SKDSQDKRSSRSITCFVRKWKEKVAWPRLTKEDI</variation>
    <location>
        <position position="105"/>
    </location>
</feature>
<name>PTG3L_HUMAN</name>
<proteinExistence type="evidence at protein level"/>
<comment type="alternative products">
    <event type="alternative splicing"/>
    <isoform>
        <id>E9PB15-1</id>
        <name>1</name>
        <sequence type="displayed"/>
    </isoform>
    <isoform>
        <id>Q9BTE6-2</id>
        <name>2</name>
        <sequence type="external"/>
    </isoform>
    <isoform>
        <id>Q9BTE6-3</id>
        <name>3</name>
        <sequence type="external"/>
    </isoform>
    <isoform>
        <id>E9PB15-2</id>
        <name>4</name>
        <sequence type="described" ref="VSP_060623 VSP_060624"/>
    </isoform>
    <isoform>
        <id>E9PB15-3</id>
        <name>5</name>
        <sequence type="described" ref="VSP_060622"/>
    </isoform>
</comment>
<comment type="similarity">
    <text evidence="3">Belongs to the p23/wos2 family.</text>
</comment>
<reference key="1">
    <citation type="journal article" date="2006" name="Nature">
        <title>DNA sequence of human chromosome 17 and analysis of rearrangement in the human lineage.</title>
        <authorList>
            <person name="Zody M.C."/>
            <person name="Garber M."/>
            <person name="Adams D.J."/>
            <person name="Sharpe T."/>
            <person name="Harrow J."/>
            <person name="Lupski J.R."/>
            <person name="Nicholson C."/>
            <person name="Searle S.M."/>
            <person name="Wilming L."/>
            <person name="Young S.K."/>
            <person name="Abouelleil A."/>
            <person name="Allen N.R."/>
            <person name="Bi W."/>
            <person name="Bloom T."/>
            <person name="Borowsky M.L."/>
            <person name="Bugalter B.E."/>
            <person name="Butler J."/>
            <person name="Chang J.L."/>
            <person name="Chen C.-K."/>
            <person name="Cook A."/>
            <person name="Corum B."/>
            <person name="Cuomo C.A."/>
            <person name="de Jong P.J."/>
            <person name="DeCaprio D."/>
            <person name="Dewar K."/>
            <person name="FitzGerald M."/>
            <person name="Gilbert J."/>
            <person name="Gibson R."/>
            <person name="Gnerre S."/>
            <person name="Goldstein S."/>
            <person name="Grafham D.V."/>
            <person name="Grocock R."/>
            <person name="Hafez N."/>
            <person name="Hagopian D.S."/>
            <person name="Hart E."/>
            <person name="Norman C.H."/>
            <person name="Humphray S."/>
            <person name="Jaffe D.B."/>
            <person name="Jones M."/>
            <person name="Kamal M."/>
            <person name="Khodiyar V.K."/>
            <person name="LaButti K."/>
            <person name="Laird G."/>
            <person name="Lehoczky J."/>
            <person name="Liu X."/>
            <person name="Lokyitsang T."/>
            <person name="Loveland J."/>
            <person name="Lui A."/>
            <person name="Macdonald P."/>
            <person name="Major J.E."/>
            <person name="Matthews L."/>
            <person name="Mauceli E."/>
            <person name="McCarroll S.A."/>
            <person name="Mihalev A.H."/>
            <person name="Mudge J."/>
            <person name="Nguyen C."/>
            <person name="Nicol R."/>
            <person name="O'Leary S.B."/>
            <person name="Osoegawa K."/>
            <person name="Schwartz D.C."/>
            <person name="Shaw-Smith C."/>
            <person name="Stankiewicz P."/>
            <person name="Steward C."/>
            <person name="Swarbreck D."/>
            <person name="Venkataraman V."/>
            <person name="Whittaker C.A."/>
            <person name="Yang X."/>
            <person name="Zimmer A.R."/>
            <person name="Bradley A."/>
            <person name="Hubbard T."/>
            <person name="Birren B.W."/>
            <person name="Rogers J."/>
            <person name="Lander E.S."/>
            <person name="Nusbaum C."/>
        </authorList>
    </citation>
    <scope>NUCLEOTIDE SEQUENCE [LARGE SCALE GENOMIC DNA]</scope>
</reference>
<gene>
    <name evidence="4" type="primary">PTGES3L</name>
</gene>